<feature type="chain" id="PRO_1000166523" description="ATP synthase subunit alpha">
    <location>
        <begin position="1"/>
        <end position="503"/>
    </location>
</feature>
<feature type="binding site" evidence="1">
    <location>
        <begin position="170"/>
        <end position="177"/>
    </location>
    <ligand>
        <name>ATP</name>
        <dbReference type="ChEBI" id="CHEBI:30616"/>
    </ligand>
</feature>
<feature type="site" description="Required for activity" evidence="1">
    <location>
        <position position="363"/>
    </location>
</feature>
<accession>C0Z778</accession>
<gene>
    <name evidence="1" type="primary">atpA</name>
    <name type="ordered locus">BBR47_54500</name>
</gene>
<protein>
    <recommendedName>
        <fullName evidence="1">ATP synthase subunit alpha</fullName>
        <ecNumber evidence="1">7.1.2.2</ecNumber>
    </recommendedName>
    <alternativeName>
        <fullName evidence="1">ATP synthase F1 sector subunit alpha</fullName>
    </alternativeName>
    <alternativeName>
        <fullName evidence="1">F-ATPase subunit alpha</fullName>
    </alternativeName>
</protein>
<sequence length="503" mass="54915">MSAIRPEEISSLIKERIANFKSEIEVVDVGTVIQVGDGIARVHGLEKAMQGELLEFQNGVMGMVLNLEEDNVGVVIMGPFRDIKEGDTVKRTGRVMEVPVGEALLGRVVNPLGQPIDGQGPIANNGFRPIESPAPGVMARKSVHEPLQTGIKAIDAMIPVGRGQRELIIGDRQTGKTAVALDTIINQKGKDMICIYVAIGQKQSTVANIVETLRKAGALEYTIIVSATASDPAPMLYLAPYTGVTMAEYFMYKGGHVLCVYDDLSKQAAAYREMSLLLRRPPGREAYPGDVFYLHSRLLERAAKLSDDLGAGSITALPFIETQAGDISAYIPTNVISITDGQIFLETDLFNAGQRPAVNTGLSVSRVGGSAQIKAMKKVAGPLKLELAQYRELAAFAQFGSDLDKATQARLTRGERLMEIMKQGQFDPMPVEKQVASIYSATRGFLDDIPVAEVRRFEKEMLSFLDSNKPQLLEHIRTTKDLPDEKEFNAAIEEFKKGFSVTR</sequence>
<evidence type="ECO:0000255" key="1">
    <source>
        <dbReference type="HAMAP-Rule" id="MF_01346"/>
    </source>
</evidence>
<organism>
    <name type="scientific">Brevibacillus brevis (strain 47 / JCM 6285 / NBRC 100599)</name>
    <dbReference type="NCBI Taxonomy" id="358681"/>
    <lineage>
        <taxon>Bacteria</taxon>
        <taxon>Bacillati</taxon>
        <taxon>Bacillota</taxon>
        <taxon>Bacilli</taxon>
        <taxon>Bacillales</taxon>
        <taxon>Paenibacillaceae</taxon>
        <taxon>Brevibacillus</taxon>
    </lineage>
</organism>
<comment type="function">
    <text evidence="1">Produces ATP from ADP in the presence of a proton gradient across the membrane. The alpha chain is a regulatory subunit.</text>
</comment>
<comment type="catalytic activity">
    <reaction evidence="1">
        <text>ATP + H2O + 4 H(+)(in) = ADP + phosphate + 5 H(+)(out)</text>
        <dbReference type="Rhea" id="RHEA:57720"/>
        <dbReference type="ChEBI" id="CHEBI:15377"/>
        <dbReference type="ChEBI" id="CHEBI:15378"/>
        <dbReference type="ChEBI" id="CHEBI:30616"/>
        <dbReference type="ChEBI" id="CHEBI:43474"/>
        <dbReference type="ChEBI" id="CHEBI:456216"/>
        <dbReference type="EC" id="7.1.2.2"/>
    </reaction>
</comment>
<comment type="subunit">
    <text evidence="1">F-type ATPases have 2 components, CF(1) - the catalytic core - and CF(0) - the membrane proton channel. CF(1) has five subunits: alpha(3), beta(3), gamma(1), delta(1), epsilon(1). CF(0) has three main subunits: a(1), b(2) and c(9-12). The alpha and beta chains form an alternating ring which encloses part of the gamma chain. CF(1) is attached to CF(0) by a central stalk formed by the gamma and epsilon chains, while a peripheral stalk is formed by the delta and b chains.</text>
</comment>
<comment type="subcellular location">
    <subcellularLocation>
        <location evidence="1">Cell membrane</location>
        <topology evidence="1">Peripheral membrane protein</topology>
    </subcellularLocation>
</comment>
<comment type="similarity">
    <text evidence="1">Belongs to the ATPase alpha/beta chains family.</text>
</comment>
<reference key="1">
    <citation type="submission" date="2005-03" db="EMBL/GenBank/DDBJ databases">
        <title>Brevibacillus brevis strain 47, complete genome.</title>
        <authorList>
            <person name="Hosoyama A."/>
            <person name="Yamada R."/>
            <person name="Hongo Y."/>
            <person name="Terui Y."/>
            <person name="Ankai A."/>
            <person name="Masuyama W."/>
            <person name="Sekiguchi M."/>
            <person name="Takeda T."/>
            <person name="Asano K."/>
            <person name="Ohji S."/>
            <person name="Ichikawa N."/>
            <person name="Narita S."/>
            <person name="Aoki N."/>
            <person name="Miura H."/>
            <person name="Matsushita S."/>
            <person name="Sekigawa T."/>
            <person name="Yamagata H."/>
            <person name="Yoshikawa H."/>
            <person name="Udaka S."/>
            <person name="Tanikawa S."/>
            <person name="Fujita N."/>
        </authorList>
    </citation>
    <scope>NUCLEOTIDE SEQUENCE [LARGE SCALE GENOMIC DNA]</scope>
    <source>
        <strain>47 / JCM 6285 / NBRC 100599</strain>
    </source>
</reference>
<proteinExistence type="inferred from homology"/>
<name>ATPA_BREBN</name>
<dbReference type="EC" id="7.1.2.2" evidence="1"/>
<dbReference type="EMBL" id="AP008955">
    <property type="protein sequence ID" value="BAH46427.1"/>
    <property type="molecule type" value="Genomic_DNA"/>
</dbReference>
<dbReference type="RefSeq" id="WP_015893620.1">
    <property type="nucleotide sequence ID" value="NC_012491.1"/>
</dbReference>
<dbReference type="SMR" id="C0Z778"/>
<dbReference type="STRING" id="358681.BBR47_54500"/>
<dbReference type="KEGG" id="bbe:BBR47_54500"/>
<dbReference type="eggNOG" id="COG0056">
    <property type="taxonomic scope" value="Bacteria"/>
</dbReference>
<dbReference type="HOGENOM" id="CLU_010091_2_1_9"/>
<dbReference type="Proteomes" id="UP000001877">
    <property type="component" value="Chromosome"/>
</dbReference>
<dbReference type="GO" id="GO:0005886">
    <property type="term" value="C:plasma membrane"/>
    <property type="evidence" value="ECO:0007669"/>
    <property type="project" value="UniProtKB-SubCell"/>
</dbReference>
<dbReference type="GO" id="GO:0045259">
    <property type="term" value="C:proton-transporting ATP synthase complex"/>
    <property type="evidence" value="ECO:0007669"/>
    <property type="project" value="UniProtKB-KW"/>
</dbReference>
<dbReference type="GO" id="GO:0043531">
    <property type="term" value="F:ADP binding"/>
    <property type="evidence" value="ECO:0007669"/>
    <property type="project" value="TreeGrafter"/>
</dbReference>
<dbReference type="GO" id="GO:0005524">
    <property type="term" value="F:ATP binding"/>
    <property type="evidence" value="ECO:0007669"/>
    <property type="project" value="UniProtKB-UniRule"/>
</dbReference>
<dbReference type="GO" id="GO:0046933">
    <property type="term" value="F:proton-transporting ATP synthase activity, rotational mechanism"/>
    <property type="evidence" value="ECO:0007669"/>
    <property type="project" value="UniProtKB-UniRule"/>
</dbReference>
<dbReference type="CDD" id="cd18113">
    <property type="entry name" value="ATP-synt_F1_alpha_C"/>
    <property type="match status" value="1"/>
</dbReference>
<dbReference type="CDD" id="cd18116">
    <property type="entry name" value="ATP-synt_F1_alpha_N"/>
    <property type="match status" value="1"/>
</dbReference>
<dbReference type="CDD" id="cd01132">
    <property type="entry name" value="F1-ATPase_alpha_CD"/>
    <property type="match status" value="1"/>
</dbReference>
<dbReference type="FunFam" id="1.20.150.20:FF:000001">
    <property type="entry name" value="ATP synthase subunit alpha"/>
    <property type="match status" value="1"/>
</dbReference>
<dbReference type="FunFam" id="2.40.30.20:FF:000001">
    <property type="entry name" value="ATP synthase subunit alpha"/>
    <property type="match status" value="1"/>
</dbReference>
<dbReference type="FunFam" id="3.40.50.300:FF:000002">
    <property type="entry name" value="ATP synthase subunit alpha"/>
    <property type="match status" value="1"/>
</dbReference>
<dbReference type="Gene3D" id="2.40.30.20">
    <property type="match status" value="1"/>
</dbReference>
<dbReference type="Gene3D" id="1.20.150.20">
    <property type="entry name" value="ATP synthase alpha/beta chain, C-terminal domain"/>
    <property type="match status" value="1"/>
</dbReference>
<dbReference type="Gene3D" id="3.40.50.300">
    <property type="entry name" value="P-loop containing nucleotide triphosphate hydrolases"/>
    <property type="match status" value="1"/>
</dbReference>
<dbReference type="HAMAP" id="MF_01346">
    <property type="entry name" value="ATP_synth_alpha_bact"/>
    <property type="match status" value="1"/>
</dbReference>
<dbReference type="InterPro" id="IPR023366">
    <property type="entry name" value="ATP_synth_asu-like_sf"/>
</dbReference>
<dbReference type="InterPro" id="IPR000793">
    <property type="entry name" value="ATP_synth_asu_C"/>
</dbReference>
<dbReference type="InterPro" id="IPR038376">
    <property type="entry name" value="ATP_synth_asu_C_sf"/>
</dbReference>
<dbReference type="InterPro" id="IPR033732">
    <property type="entry name" value="ATP_synth_F1_a_nt-bd_dom"/>
</dbReference>
<dbReference type="InterPro" id="IPR005294">
    <property type="entry name" value="ATP_synth_F1_asu"/>
</dbReference>
<dbReference type="InterPro" id="IPR020003">
    <property type="entry name" value="ATPase_a/bsu_AS"/>
</dbReference>
<dbReference type="InterPro" id="IPR004100">
    <property type="entry name" value="ATPase_F1/V1/A1_a/bsu_N"/>
</dbReference>
<dbReference type="InterPro" id="IPR036121">
    <property type="entry name" value="ATPase_F1/V1/A1_a/bsu_N_sf"/>
</dbReference>
<dbReference type="InterPro" id="IPR000194">
    <property type="entry name" value="ATPase_F1/V1/A1_a/bsu_nucl-bd"/>
</dbReference>
<dbReference type="InterPro" id="IPR027417">
    <property type="entry name" value="P-loop_NTPase"/>
</dbReference>
<dbReference type="NCBIfam" id="TIGR00962">
    <property type="entry name" value="atpA"/>
    <property type="match status" value="1"/>
</dbReference>
<dbReference type="NCBIfam" id="NF009884">
    <property type="entry name" value="PRK13343.1"/>
    <property type="match status" value="1"/>
</dbReference>
<dbReference type="PANTHER" id="PTHR48082">
    <property type="entry name" value="ATP SYNTHASE SUBUNIT ALPHA, MITOCHONDRIAL"/>
    <property type="match status" value="1"/>
</dbReference>
<dbReference type="PANTHER" id="PTHR48082:SF2">
    <property type="entry name" value="ATP SYNTHASE SUBUNIT ALPHA, MITOCHONDRIAL"/>
    <property type="match status" value="1"/>
</dbReference>
<dbReference type="Pfam" id="PF00006">
    <property type="entry name" value="ATP-synt_ab"/>
    <property type="match status" value="1"/>
</dbReference>
<dbReference type="Pfam" id="PF00306">
    <property type="entry name" value="ATP-synt_ab_C"/>
    <property type="match status" value="1"/>
</dbReference>
<dbReference type="Pfam" id="PF02874">
    <property type="entry name" value="ATP-synt_ab_N"/>
    <property type="match status" value="1"/>
</dbReference>
<dbReference type="PIRSF" id="PIRSF039088">
    <property type="entry name" value="F_ATPase_subunit_alpha"/>
    <property type="match status" value="1"/>
</dbReference>
<dbReference type="SUPFAM" id="SSF47917">
    <property type="entry name" value="C-terminal domain of alpha and beta subunits of F1 ATP synthase"/>
    <property type="match status" value="1"/>
</dbReference>
<dbReference type="SUPFAM" id="SSF50615">
    <property type="entry name" value="N-terminal domain of alpha and beta subunits of F1 ATP synthase"/>
    <property type="match status" value="1"/>
</dbReference>
<dbReference type="SUPFAM" id="SSF52540">
    <property type="entry name" value="P-loop containing nucleoside triphosphate hydrolases"/>
    <property type="match status" value="1"/>
</dbReference>
<dbReference type="PROSITE" id="PS00152">
    <property type="entry name" value="ATPASE_ALPHA_BETA"/>
    <property type="match status" value="1"/>
</dbReference>
<keyword id="KW-0066">ATP synthesis</keyword>
<keyword id="KW-0067">ATP-binding</keyword>
<keyword id="KW-1003">Cell membrane</keyword>
<keyword id="KW-0139">CF(1)</keyword>
<keyword id="KW-0375">Hydrogen ion transport</keyword>
<keyword id="KW-0406">Ion transport</keyword>
<keyword id="KW-0472">Membrane</keyword>
<keyword id="KW-0547">Nucleotide-binding</keyword>
<keyword id="KW-1185">Reference proteome</keyword>
<keyword id="KW-1278">Translocase</keyword>
<keyword id="KW-0813">Transport</keyword>